<accession>A5V9R3</accession>
<evidence type="ECO:0000255" key="1">
    <source>
        <dbReference type="HAMAP-Rule" id="MF_00758"/>
    </source>
</evidence>
<name>Y2673_RHIWR</name>
<protein>
    <recommendedName>
        <fullName evidence="1">UPF0301 protein Swit_2673</fullName>
    </recommendedName>
</protein>
<dbReference type="EMBL" id="CP000699">
    <property type="protein sequence ID" value="ABQ69029.1"/>
    <property type="molecule type" value="Genomic_DNA"/>
</dbReference>
<dbReference type="SMR" id="A5V9R3"/>
<dbReference type="STRING" id="392499.Swit_2673"/>
<dbReference type="PaxDb" id="392499-Swit_2673"/>
<dbReference type="KEGG" id="swi:Swit_2673"/>
<dbReference type="eggNOG" id="COG1678">
    <property type="taxonomic scope" value="Bacteria"/>
</dbReference>
<dbReference type="HOGENOM" id="CLU_057596_1_0_5"/>
<dbReference type="OrthoDB" id="9807486at2"/>
<dbReference type="Proteomes" id="UP000001989">
    <property type="component" value="Chromosome"/>
</dbReference>
<dbReference type="GO" id="GO:0005829">
    <property type="term" value="C:cytosol"/>
    <property type="evidence" value="ECO:0007669"/>
    <property type="project" value="TreeGrafter"/>
</dbReference>
<dbReference type="Gene3D" id="3.40.1740.10">
    <property type="entry name" value="VC0467-like"/>
    <property type="match status" value="1"/>
</dbReference>
<dbReference type="HAMAP" id="MF_00758">
    <property type="entry name" value="UPF0301"/>
    <property type="match status" value="1"/>
</dbReference>
<dbReference type="InterPro" id="IPR003774">
    <property type="entry name" value="AlgH-like"/>
</dbReference>
<dbReference type="PANTHER" id="PTHR30327">
    <property type="entry name" value="UNCHARACTERIZED PROTEIN YQGE"/>
    <property type="match status" value="1"/>
</dbReference>
<dbReference type="PANTHER" id="PTHR30327:SF1">
    <property type="entry name" value="UPF0301 PROTEIN YQGE"/>
    <property type="match status" value="1"/>
</dbReference>
<dbReference type="Pfam" id="PF02622">
    <property type="entry name" value="DUF179"/>
    <property type="match status" value="1"/>
</dbReference>
<dbReference type="SUPFAM" id="SSF143456">
    <property type="entry name" value="VC0467-like"/>
    <property type="match status" value="1"/>
</dbReference>
<keyword id="KW-1185">Reference proteome</keyword>
<proteinExistence type="inferred from homology"/>
<comment type="similarity">
    <text evidence="1">Belongs to the UPF0301 (AlgH) family.</text>
</comment>
<sequence length="186" mass="20079">MDAPASLRGQLLLAMPGIGDPRFEKAVIAMCAHDENGALGVGVDRVMPGITLHGLLEQLDVDPGIAPDCDILLGGPVEQRRGFVLHSTDWLGEDSLLVEDRWCLTSTLDVLRAIAEGKGPARWLVALGYAGWGEGQLDGEMRRHGWLATRAEDGLIFDHRPPRRWEAAMRSAGIDPRLLAATSGQA</sequence>
<reference key="1">
    <citation type="journal article" date="2010" name="J. Bacteriol.">
        <title>Genome sequence of the dioxin-mineralizing bacterium Sphingomonas wittichii RW1.</title>
        <authorList>
            <person name="Miller T.R."/>
            <person name="Delcher A.L."/>
            <person name="Salzberg S.L."/>
            <person name="Saunders E."/>
            <person name="Detter J.C."/>
            <person name="Halden R.U."/>
        </authorList>
    </citation>
    <scope>NUCLEOTIDE SEQUENCE [LARGE SCALE GENOMIC DNA]</scope>
    <source>
        <strain>DSM 6014 / CCUG 31198 / JCM 15750 / NBRC 105917 / EY 4224 / RW1</strain>
    </source>
</reference>
<feature type="chain" id="PRO_1000046688" description="UPF0301 protein Swit_2673">
    <location>
        <begin position="1"/>
        <end position="186"/>
    </location>
</feature>
<gene>
    <name type="ordered locus">Swit_2673</name>
</gene>
<organism>
    <name type="scientific">Rhizorhabdus wittichii (strain DSM 6014 / CCUG 31198 / JCM 15750 / NBRC 105917 / EY 4224 / RW1)</name>
    <name type="common">Sphingomonas wittichii</name>
    <dbReference type="NCBI Taxonomy" id="392499"/>
    <lineage>
        <taxon>Bacteria</taxon>
        <taxon>Pseudomonadati</taxon>
        <taxon>Pseudomonadota</taxon>
        <taxon>Alphaproteobacteria</taxon>
        <taxon>Sphingomonadales</taxon>
        <taxon>Sphingomonadaceae</taxon>
        <taxon>Rhizorhabdus</taxon>
    </lineage>
</organism>